<keyword id="KW-0963">Cytoplasm</keyword>
<keyword id="KW-0217">Developmental protein</keyword>
<keyword id="KW-0238">DNA-binding</keyword>
<keyword id="KW-0539">Nucleus</keyword>
<keyword id="KW-1185">Reference proteome</keyword>
<keyword id="KW-0677">Repeat</keyword>
<reference key="1">
    <citation type="journal article" date="2005" name="Science">
        <title>The transcriptional landscape of the mammalian genome.</title>
        <authorList>
            <person name="Carninci P."/>
            <person name="Kasukawa T."/>
            <person name="Katayama S."/>
            <person name="Gough J."/>
            <person name="Frith M.C."/>
            <person name="Maeda N."/>
            <person name="Oyama R."/>
            <person name="Ravasi T."/>
            <person name="Lenhard B."/>
            <person name="Wells C."/>
            <person name="Kodzius R."/>
            <person name="Shimokawa K."/>
            <person name="Bajic V.B."/>
            <person name="Brenner S.E."/>
            <person name="Batalov S."/>
            <person name="Forrest A.R."/>
            <person name="Zavolan M."/>
            <person name="Davis M.J."/>
            <person name="Wilming L.G."/>
            <person name="Aidinis V."/>
            <person name="Allen J.E."/>
            <person name="Ambesi-Impiombato A."/>
            <person name="Apweiler R."/>
            <person name="Aturaliya R.N."/>
            <person name="Bailey T.L."/>
            <person name="Bansal M."/>
            <person name="Baxter L."/>
            <person name="Beisel K.W."/>
            <person name="Bersano T."/>
            <person name="Bono H."/>
            <person name="Chalk A.M."/>
            <person name="Chiu K.P."/>
            <person name="Choudhary V."/>
            <person name="Christoffels A."/>
            <person name="Clutterbuck D.R."/>
            <person name="Crowe M.L."/>
            <person name="Dalla E."/>
            <person name="Dalrymple B.P."/>
            <person name="de Bono B."/>
            <person name="Della Gatta G."/>
            <person name="di Bernardo D."/>
            <person name="Down T."/>
            <person name="Engstrom P."/>
            <person name="Fagiolini M."/>
            <person name="Faulkner G."/>
            <person name="Fletcher C.F."/>
            <person name="Fukushima T."/>
            <person name="Furuno M."/>
            <person name="Futaki S."/>
            <person name="Gariboldi M."/>
            <person name="Georgii-Hemming P."/>
            <person name="Gingeras T.R."/>
            <person name="Gojobori T."/>
            <person name="Green R.E."/>
            <person name="Gustincich S."/>
            <person name="Harbers M."/>
            <person name="Hayashi Y."/>
            <person name="Hensch T.K."/>
            <person name="Hirokawa N."/>
            <person name="Hill D."/>
            <person name="Huminiecki L."/>
            <person name="Iacono M."/>
            <person name="Ikeo K."/>
            <person name="Iwama A."/>
            <person name="Ishikawa T."/>
            <person name="Jakt M."/>
            <person name="Kanapin A."/>
            <person name="Katoh M."/>
            <person name="Kawasawa Y."/>
            <person name="Kelso J."/>
            <person name="Kitamura H."/>
            <person name="Kitano H."/>
            <person name="Kollias G."/>
            <person name="Krishnan S.P."/>
            <person name="Kruger A."/>
            <person name="Kummerfeld S.K."/>
            <person name="Kurochkin I.V."/>
            <person name="Lareau L.F."/>
            <person name="Lazarevic D."/>
            <person name="Lipovich L."/>
            <person name="Liu J."/>
            <person name="Liuni S."/>
            <person name="McWilliam S."/>
            <person name="Madan Babu M."/>
            <person name="Madera M."/>
            <person name="Marchionni L."/>
            <person name="Matsuda H."/>
            <person name="Matsuzawa S."/>
            <person name="Miki H."/>
            <person name="Mignone F."/>
            <person name="Miyake S."/>
            <person name="Morris K."/>
            <person name="Mottagui-Tabar S."/>
            <person name="Mulder N."/>
            <person name="Nakano N."/>
            <person name="Nakauchi H."/>
            <person name="Ng P."/>
            <person name="Nilsson R."/>
            <person name="Nishiguchi S."/>
            <person name="Nishikawa S."/>
            <person name="Nori F."/>
            <person name="Ohara O."/>
            <person name="Okazaki Y."/>
            <person name="Orlando V."/>
            <person name="Pang K.C."/>
            <person name="Pavan W.J."/>
            <person name="Pavesi G."/>
            <person name="Pesole G."/>
            <person name="Petrovsky N."/>
            <person name="Piazza S."/>
            <person name="Reed J."/>
            <person name="Reid J.F."/>
            <person name="Ring B.Z."/>
            <person name="Ringwald M."/>
            <person name="Rost B."/>
            <person name="Ruan Y."/>
            <person name="Salzberg S.L."/>
            <person name="Sandelin A."/>
            <person name="Schneider C."/>
            <person name="Schoenbach C."/>
            <person name="Sekiguchi K."/>
            <person name="Semple C.A."/>
            <person name="Seno S."/>
            <person name="Sessa L."/>
            <person name="Sheng Y."/>
            <person name="Shibata Y."/>
            <person name="Shimada H."/>
            <person name="Shimada K."/>
            <person name="Silva D."/>
            <person name="Sinclair B."/>
            <person name="Sperling S."/>
            <person name="Stupka E."/>
            <person name="Sugiura K."/>
            <person name="Sultana R."/>
            <person name="Takenaka Y."/>
            <person name="Taki K."/>
            <person name="Tammoja K."/>
            <person name="Tan S.L."/>
            <person name="Tang S."/>
            <person name="Taylor M.S."/>
            <person name="Tegner J."/>
            <person name="Teichmann S.A."/>
            <person name="Ueda H.R."/>
            <person name="van Nimwegen E."/>
            <person name="Verardo R."/>
            <person name="Wei C.L."/>
            <person name="Yagi K."/>
            <person name="Yamanishi H."/>
            <person name="Zabarovsky E."/>
            <person name="Zhu S."/>
            <person name="Zimmer A."/>
            <person name="Hide W."/>
            <person name="Bult C."/>
            <person name="Grimmond S.M."/>
            <person name="Teasdale R.D."/>
            <person name="Liu E.T."/>
            <person name="Brusic V."/>
            <person name="Quackenbush J."/>
            <person name="Wahlestedt C."/>
            <person name="Mattick J.S."/>
            <person name="Hume D.A."/>
            <person name="Kai C."/>
            <person name="Sasaki D."/>
            <person name="Tomaru Y."/>
            <person name="Fukuda S."/>
            <person name="Kanamori-Katayama M."/>
            <person name="Suzuki M."/>
            <person name="Aoki J."/>
            <person name="Arakawa T."/>
            <person name="Iida J."/>
            <person name="Imamura K."/>
            <person name="Itoh M."/>
            <person name="Kato T."/>
            <person name="Kawaji H."/>
            <person name="Kawagashira N."/>
            <person name="Kawashima T."/>
            <person name="Kojima M."/>
            <person name="Kondo S."/>
            <person name="Konno H."/>
            <person name="Nakano K."/>
            <person name="Ninomiya N."/>
            <person name="Nishio T."/>
            <person name="Okada M."/>
            <person name="Plessy C."/>
            <person name="Shibata K."/>
            <person name="Shiraki T."/>
            <person name="Suzuki S."/>
            <person name="Tagami M."/>
            <person name="Waki K."/>
            <person name="Watahiki A."/>
            <person name="Okamura-Oho Y."/>
            <person name="Suzuki H."/>
            <person name="Kawai J."/>
            <person name="Hayashizaki Y."/>
        </authorList>
    </citation>
    <scope>NUCLEOTIDE SEQUENCE [LARGE SCALE MRNA]</scope>
    <source>
        <strain>C57BL/6J</strain>
        <tissue>Egg</tissue>
    </source>
</reference>
<reference key="2">
    <citation type="submission" date="2005-07" db="EMBL/GenBank/DDBJ databases">
        <authorList>
            <person name="Mural R.J."/>
            <person name="Adams M.D."/>
            <person name="Myers E.W."/>
            <person name="Smith H.O."/>
            <person name="Venter J.C."/>
        </authorList>
    </citation>
    <scope>NUCLEOTIDE SEQUENCE [LARGE SCALE GENOMIC DNA]</scope>
</reference>
<reference key="3">
    <citation type="journal article" date="2004" name="Genome Res.">
        <title>The status, quality, and expansion of the NIH full-length cDNA project: the Mammalian Gene Collection (MGC).</title>
        <authorList>
            <consortium name="The MGC Project Team"/>
        </authorList>
    </citation>
    <scope>NUCLEOTIDE SEQUENCE [LARGE SCALE MRNA]</scope>
    <source>
        <tissue>Brain</tissue>
    </source>
</reference>
<reference key="4">
    <citation type="journal article" date="2010" name="Hum. Mol. Genet.">
        <title>Involvement of a novel preimplantation-specific gene encoding the high mobility group box protein Hmgpi in early embryonic development.</title>
        <authorList>
            <person name="Yamada M."/>
            <person name="Hamatani T."/>
            <person name="Akutsu H."/>
            <person name="Chikazawa N."/>
            <person name="Kuji N."/>
            <person name="Yoshimura Y."/>
            <person name="Umezawa A."/>
        </authorList>
    </citation>
    <scope>FUNCTION</scope>
    <scope>SUBCELLULAR LOCATION</scope>
    <scope>DEVELOPMENTAL STAGE</scope>
</reference>
<sequence>MTSLDNQGLWSEKDILKLLECMEHNIPSDDSREFKKSQADLNWSKVAFGLFSGEMCKQKWMEISYNLRKFRTLTELVQEAKFSFTKKTHKNKILTEHPDRPKRPLTAYLRFYKEQRAKYCQMYPKYSNAQLTKILAEKYRQLPAEIKQRYIMDFKKEKEDFQKKMRQFKKRHPVSGHPKKSVVPQSHPTKVPTKSQGDIKNVKSLVKTESPRTVSSDMKFQGEPRKPPMNAYHKFHQESWSSPELRHLSFRKRWVEISRRWHQVPENEKEHYSNQVKRLQKQYRVKLDLWLKRLSPEEYAAYKEAKATCGKRKNMSMSGGRSSKFGRTEQSSSEKGLQIKPGEVEELLDPGTDSSGTIQGHHDGAQSSRQDFTDDSEEDDSSTSSDSSSTDEDD</sequence>
<organism>
    <name type="scientific">Mus musculus</name>
    <name type="common">Mouse</name>
    <dbReference type="NCBI Taxonomy" id="10090"/>
    <lineage>
        <taxon>Eukaryota</taxon>
        <taxon>Metazoa</taxon>
        <taxon>Chordata</taxon>
        <taxon>Craniata</taxon>
        <taxon>Vertebrata</taxon>
        <taxon>Euteleostomi</taxon>
        <taxon>Mammalia</taxon>
        <taxon>Eutheria</taxon>
        <taxon>Euarchontoglires</taxon>
        <taxon>Glires</taxon>
        <taxon>Rodentia</taxon>
        <taxon>Myomorpha</taxon>
        <taxon>Muroidea</taxon>
        <taxon>Muridae</taxon>
        <taxon>Murinae</taxon>
        <taxon>Mus</taxon>
        <taxon>Mus</taxon>
    </lineage>
</organism>
<evidence type="ECO:0000255" key="1">
    <source>
        <dbReference type="PROSITE-ProRule" id="PRU00267"/>
    </source>
</evidence>
<evidence type="ECO:0000256" key="2">
    <source>
        <dbReference type="SAM" id="MobiDB-lite"/>
    </source>
</evidence>
<evidence type="ECO:0000269" key="3">
    <source>
    </source>
</evidence>
<evidence type="ECO:0000303" key="4">
    <source>
    </source>
</evidence>
<evidence type="ECO:0000305" key="5"/>
<evidence type="ECO:0000312" key="6">
    <source>
        <dbReference type="MGI" id="MGI:3588290"/>
    </source>
</evidence>
<dbReference type="EMBL" id="AK139937">
    <property type="protein sequence ID" value="BAE24188.1"/>
    <property type="molecule type" value="mRNA"/>
</dbReference>
<dbReference type="EMBL" id="AK163257">
    <property type="protein sequence ID" value="BAE37262.1"/>
    <property type="molecule type" value="mRNA"/>
</dbReference>
<dbReference type="EMBL" id="CH466522">
    <property type="protein sequence ID" value="EDL25044.1"/>
    <property type="molecule type" value="Genomic_DNA"/>
</dbReference>
<dbReference type="EMBL" id="CH466522">
    <property type="protein sequence ID" value="EDL25045.1"/>
    <property type="molecule type" value="Genomic_DNA"/>
</dbReference>
<dbReference type="EMBL" id="BC139141">
    <property type="protein sequence ID" value="AAI39142.1"/>
    <property type="molecule type" value="mRNA"/>
</dbReference>
<dbReference type="EMBL" id="BC145822">
    <property type="protein sequence ID" value="AAI45823.1"/>
    <property type="molecule type" value="mRNA"/>
</dbReference>
<dbReference type="CCDS" id="CCDS40540.1"/>
<dbReference type="RefSeq" id="NP_001028965.1">
    <property type="nucleotide sequence ID" value="NM_001033793.3"/>
</dbReference>
<dbReference type="RefSeq" id="NP_001347145.1">
    <property type="nucleotide sequence ID" value="NM_001360216.1"/>
</dbReference>
<dbReference type="RefSeq" id="XP_011240880.1">
    <property type="nucleotide sequence ID" value="XM_011242578.1"/>
</dbReference>
<dbReference type="SMR" id="Q3USZ2"/>
<dbReference type="FunCoup" id="Q3USZ2">
    <property type="interactions" value="76"/>
</dbReference>
<dbReference type="STRING" id="10090.ENSMUSP00000126540"/>
<dbReference type="iPTMnet" id="Q3USZ2"/>
<dbReference type="PhosphoSitePlus" id="Q3USZ2"/>
<dbReference type="PaxDb" id="10090-ENSMUSP00000129611"/>
<dbReference type="ProteomicsDB" id="298088"/>
<dbReference type="Antibodypedia" id="74795">
    <property type="antibodies" value="22 antibodies from 11 providers"/>
</dbReference>
<dbReference type="Ensembl" id="ENSMUST00000098973.3">
    <property type="protein sequence ID" value="ENSMUSP00000096572.3"/>
    <property type="gene ID" value="ENSMUSG00000074502.5"/>
</dbReference>
<dbReference type="Ensembl" id="ENSMUST00000164441.2">
    <property type="protein sequence ID" value="ENSMUSP00000129611.2"/>
    <property type="gene ID" value="ENSMUSG00000074502.5"/>
</dbReference>
<dbReference type="Ensembl" id="ENSMUST00000169398.3">
    <property type="protein sequence ID" value="ENSMUSP00000126540.2"/>
    <property type="gene ID" value="ENSMUSG00000074502.5"/>
</dbReference>
<dbReference type="GeneID" id="546118"/>
<dbReference type="KEGG" id="mmu:546118"/>
<dbReference type="UCSC" id="uc009ogq.1">
    <property type="organism name" value="mouse"/>
</dbReference>
<dbReference type="AGR" id="MGI:3588290"/>
<dbReference type="CTD" id="642623"/>
<dbReference type="MGI" id="MGI:3588290">
    <property type="gene designation" value="Ubtfl1"/>
</dbReference>
<dbReference type="VEuPathDB" id="HostDB:ENSMUSG00000074502"/>
<dbReference type="eggNOG" id="KOG0381">
    <property type="taxonomic scope" value="Eukaryota"/>
</dbReference>
<dbReference type="GeneTree" id="ENSGT00940000163858"/>
<dbReference type="HOGENOM" id="CLU_021068_0_0_1"/>
<dbReference type="InParanoid" id="Q3USZ2"/>
<dbReference type="OMA" id="FHQDSWS"/>
<dbReference type="OrthoDB" id="1919336at2759"/>
<dbReference type="PhylomeDB" id="Q3USZ2"/>
<dbReference type="TreeFam" id="TF328989"/>
<dbReference type="BioGRID-ORCS" id="546118">
    <property type="hits" value="0 hits in 75 CRISPR screens"/>
</dbReference>
<dbReference type="PRO" id="PR:Q3USZ2"/>
<dbReference type="Proteomes" id="UP000000589">
    <property type="component" value="Chromosome 9"/>
</dbReference>
<dbReference type="RNAct" id="Q3USZ2">
    <property type="molecule type" value="protein"/>
</dbReference>
<dbReference type="Bgee" id="ENSMUSG00000074502">
    <property type="expression patterns" value="Expressed in cleaving embryo and 2 other cell types or tissues"/>
</dbReference>
<dbReference type="GO" id="GO:0005737">
    <property type="term" value="C:cytoplasm"/>
    <property type="evidence" value="ECO:0000314"/>
    <property type="project" value="MGI"/>
</dbReference>
<dbReference type="GO" id="GO:0005634">
    <property type="term" value="C:nucleus"/>
    <property type="evidence" value="ECO:0000314"/>
    <property type="project" value="MGI"/>
</dbReference>
<dbReference type="GO" id="GO:0003677">
    <property type="term" value="F:DNA binding"/>
    <property type="evidence" value="ECO:0007669"/>
    <property type="project" value="UniProtKB-KW"/>
</dbReference>
<dbReference type="GO" id="GO:0001832">
    <property type="term" value="P:blastocyst growth"/>
    <property type="evidence" value="ECO:0000315"/>
    <property type="project" value="MGI"/>
</dbReference>
<dbReference type="GO" id="GO:0007566">
    <property type="term" value="P:embryo implantation"/>
    <property type="evidence" value="ECO:0000315"/>
    <property type="project" value="MGI"/>
</dbReference>
<dbReference type="GO" id="GO:0010468">
    <property type="term" value="P:regulation of gene expression"/>
    <property type="evidence" value="ECO:0000315"/>
    <property type="project" value="MGI"/>
</dbReference>
<dbReference type="CDD" id="cd21998">
    <property type="entry name" value="HMG-box_UBF1_rpt1-like"/>
    <property type="match status" value="1"/>
</dbReference>
<dbReference type="CDD" id="cd22003">
    <property type="entry name" value="HMG-box_UBF1_rpt6-like"/>
    <property type="match status" value="1"/>
</dbReference>
<dbReference type="Gene3D" id="1.10.30.10">
    <property type="entry name" value="High mobility group box domain"/>
    <property type="match status" value="2"/>
</dbReference>
<dbReference type="InterPro" id="IPR009071">
    <property type="entry name" value="HMG_box_dom"/>
</dbReference>
<dbReference type="InterPro" id="IPR036910">
    <property type="entry name" value="HMG_box_dom_sf"/>
</dbReference>
<dbReference type="InterPro" id="IPR051762">
    <property type="entry name" value="UBF1"/>
</dbReference>
<dbReference type="PANTHER" id="PTHR46318">
    <property type="entry name" value="UPSTREAM BINDING TRANSCRIPTION FACTOR"/>
    <property type="match status" value="1"/>
</dbReference>
<dbReference type="PANTHER" id="PTHR46318:SF1">
    <property type="entry name" value="UPSTREAM-BINDING FACTOR 1-LIKE PROTEIN 1-RELATED"/>
    <property type="match status" value="1"/>
</dbReference>
<dbReference type="Pfam" id="PF00505">
    <property type="entry name" value="HMG_box"/>
    <property type="match status" value="1"/>
</dbReference>
<dbReference type="SMART" id="SM00398">
    <property type="entry name" value="HMG"/>
    <property type="match status" value="2"/>
</dbReference>
<dbReference type="SUPFAM" id="SSF47095">
    <property type="entry name" value="HMG-box"/>
    <property type="match status" value="2"/>
</dbReference>
<dbReference type="PROSITE" id="PS50118">
    <property type="entry name" value="HMG_BOX_2"/>
    <property type="match status" value="2"/>
</dbReference>
<accession>Q3USZ2</accession>
<accession>Q3TQX0</accession>
<gene>
    <name evidence="6" type="primary">Ubtfl1</name>
    <name evidence="4" type="synonym">Hmgpi</name>
</gene>
<proteinExistence type="evidence at protein level"/>
<name>UBFL1_MOUSE</name>
<comment type="function">
    <text evidence="3">Essential for proliferation of the inner cell mass and trophectodermal cells in peri-implantation development.</text>
</comment>
<comment type="subcellular location">
    <subcellularLocation>
        <location evidence="3">Cytoplasm</location>
    </subcellularLocation>
    <subcellularLocation>
        <location evidence="1 3">Nucleus</location>
    </subcellularLocation>
    <text evidence="3">Mainly cytoplasmic from the 4-cell stage to the morula stage. Becomes nuclear at the blastocyst stage. In ES cells, found in both the nucleus and the cytoplasm.</text>
</comment>
<comment type="developmental stage">
    <text evidence="3">Transcriptionally activated at the 2-cell stage, peaks at the 4-cell stage and then gradually decreased until the blastocyst stage. The protein is detected from the 4-cell stage until the blastocyst stage. In blastocysts, expressed both by inner cell mass and trophectodermal cells (at protein level). Not detected in post-implentation, neither in fetal, nor adult tissues.</text>
</comment>
<feature type="chain" id="PRO_0000386641" description="Upstream-binding factor 1-like protein 1">
    <location>
        <begin position="1"/>
        <end position="394"/>
    </location>
</feature>
<feature type="DNA-binding region" description="HMG box 1" evidence="1">
    <location>
        <begin position="101"/>
        <end position="169"/>
    </location>
</feature>
<feature type="DNA-binding region" description="HMG box 2" evidence="1">
    <location>
        <begin position="225"/>
        <end position="291"/>
    </location>
</feature>
<feature type="region of interest" description="Disordered" evidence="2">
    <location>
        <begin position="167"/>
        <end position="197"/>
    </location>
</feature>
<feature type="region of interest" description="Disordered" evidence="2">
    <location>
        <begin position="305"/>
        <end position="394"/>
    </location>
</feature>
<feature type="compositionally biased region" description="Basic residues" evidence="2">
    <location>
        <begin position="167"/>
        <end position="180"/>
    </location>
</feature>
<feature type="compositionally biased region" description="Polar residues" evidence="2">
    <location>
        <begin position="183"/>
        <end position="197"/>
    </location>
</feature>
<feature type="sequence conflict" description="In Ref. 1; BAE37262." evidence="5" ref="1">
    <original>V</original>
    <variation>L</variation>
    <location>
        <position position="344"/>
    </location>
</feature>
<protein>
    <recommendedName>
        <fullName evidence="5">Upstream-binding factor 1-like protein 1</fullName>
    </recommendedName>
    <alternativeName>
        <fullName evidence="4">HMG-box preimplantation embryo-specific protein</fullName>
        <shortName evidence="4">HMGPI</shortName>
    </alternativeName>
</protein>